<dbReference type="EC" id="3.6.1.-" evidence="1"/>
<dbReference type="EMBL" id="CP000413">
    <property type="protein sequence ID" value="ABJ60156.1"/>
    <property type="molecule type" value="Genomic_DNA"/>
</dbReference>
<dbReference type="RefSeq" id="WP_003647525.1">
    <property type="nucleotide sequence ID" value="NZ_WBMG01000005.1"/>
</dbReference>
<dbReference type="SMR" id="Q044G6"/>
<dbReference type="GeneID" id="29638647"/>
<dbReference type="KEGG" id="lga:LGAS_0765"/>
<dbReference type="HOGENOM" id="CLU_033617_2_1_9"/>
<dbReference type="BioCyc" id="LGAS324831:G1G6Y-759-MONOMER"/>
<dbReference type="Proteomes" id="UP000000664">
    <property type="component" value="Chromosome"/>
</dbReference>
<dbReference type="GO" id="GO:0005737">
    <property type="term" value="C:cytoplasm"/>
    <property type="evidence" value="ECO:0007669"/>
    <property type="project" value="UniProtKB-SubCell"/>
</dbReference>
<dbReference type="GO" id="GO:0005525">
    <property type="term" value="F:GTP binding"/>
    <property type="evidence" value="ECO:0007669"/>
    <property type="project" value="UniProtKB-UniRule"/>
</dbReference>
<dbReference type="GO" id="GO:0003924">
    <property type="term" value="F:GTPase activity"/>
    <property type="evidence" value="ECO:0007669"/>
    <property type="project" value="UniProtKB-UniRule"/>
</dbReference>
<dbReference type="GO" id="GO:0046872">
    <property type="term" value="F:metal ion binding"/>
    <property type="evidence" value="ECO:0007669"/>
    <property type="project" value="UniProtKB-KW"/>
</dbReference>
<dbReference type="GO" id="GO:0019843">
    <property type="term" value="F:rRNA binding"/>
    <property type="evidence" value="ECO:0007669"/>
    <property type="project" value="UniProtKB-KW"/>
</dbReference>
<dbReference type="GO" id="GO:0042274">
    <property type="term" value="P:ribosomal small subunit biogenesis"/>
    <property type="evidence" value="ECO:0007669"/>
    <property type="project" value="UniProtKB-UniRule"/>
</dbReference>
<dbReference type="CDD" id="cd04466">
    <property type="entry name" value="S1_YloQ_GTPase"/>
    <property type="match status" value="1"/>
</dbReference>
<dbReference type="CDD" id="cd01854">
    <property type="entry name" value="YjeQ_EngC"/>
    <property type="match status" value="1"/>
</dbReference>
<dbReference type="Gene3D" id="2.40.50.140">
    <property type="entry name" value="Nucleic acid-binding proteins"/>
    <property type="match status" value="1"/>
</dbReference>
<dbReference type="Gene3D" id="3.40.50.300">
    <property type="entry name" value="P-loop containing nucleotide triphosphate hydrolases"/>
    <property type="match status" value="1"/>
</dbReference>
<dbReference type="Gene3D" id="1.10.40.50">
    <property type="entry name" value="Probable gtpase engc, domain 3"/>
    <property type="match status" value="1"/>
</dbReference>
<dbReference type="HAMAP" id="MF_01820">
    <property type="entry name" value="GTPase_RsgA"/>
    <property type="match status" value="1"/>
</dbReference>
<dbReference type="InterPro" id="IPR030378">
    <property type="entry name" value="G_CP_dom"/>
</dbReference>
<dbReference type="InterPro" id="IPR012340">
    <property type="entry name" value="NA-bd_OB-fold"/>
</dbReference>
<dbReference type="InterPro" id="IPR027417">
    <property type="entry name" value="P-loop_NTPase"/>
</dbReference>
<dbReference type="InterPro" id="IPR004881">
    <property type="entry name" value="Ribosome_biogen_GTPase_RsgA"/>
</dbReference>
<dbReference type="InterPro" id="IPR010914">
    <property type="entry name" value="RsgA_GTPase_dom"/>
</dbReference>
<dbReference type="InterPro" id="IPR031944">
    <property type="entry name" value="RsgA_N"/>
</dbReference>
<dbReference type="NCBIfam" id="TIGR00157">
    <property type="entry name" value="ribosome small subunit-dependent GTPase A"/>
    <property type="match status" value="1"/>
</dbReference>
<dbReference type="PANTHER" id="PTHR32120">
    <property type="entry name" value="SMALL RIBOSOMAL SUBUNIT BIOGENESIS GTPASE RSGA"/>
    <property type="match status" value="1"/>
</dbReference>
<dbReference type="PANTHER" id="PTHR32120:SF11">
    <property type="entry name" value="SMALL RIBOSOMAL SUBUNIT BIOGENESIS GTPASE RSGA 1, MITOCHONDRIAL-RELATED"/>
    <property type="match status" value="1"/>
</dbReference>
<dbReference type="Pfam" id="PF03193">
    <property type="entry name" value="RsgA_GTPase"/>
    <property type="match status" value="1"/>
</dbReference>
<dbReference type="Pfam" id="PF16745">
    <property type="entry name" value="RsgA_N"/>
    <property type="match status" value="1"/>
</dbReference>
<dbReference type="SUPFAM" id="SSF50249">
    <property type="entry name" value="Nucleic acid-binding proteins"/>
    <property type="match status" value="1"/>
</dbReference>
<dbReference type="SUPFAM" id="SSF52540">
    <property type="entry name" value="P-loop containing nucleoside triphosphate hydrolases"/>
    <property type="match status" value="1"/>
</dbReference>
<dbReference type="PROSITE" id="PS50936">
    <property type="entry name" value="ENGC_GTPASE"/>
    <property type="match status" value="1"/>
</dbReference>
<dbReference type="PROSITE" id="PS51721">
    <property type="entry name" value="G_CP"/>
    <property type="match status" value="1"/>
</dbReference>
<proteinExistence type="inferred from homology"/>
<organism>
    <name type="scientific">Lactobacillus gasseri (strain ATCC 33323 / DSM 20243 / BCRC 14619 / CIP 102991 / JCM 1131 / KCTC 3163 / NCIMB 11718 / NCTC 13722 / AM63)</name>
    <dbReference type="NCBI Taxonomy" id="324831"/>
    <lineage>
        <taxon>Bacteria</taxon>
        <taxon>Bacillati</taxon>
        <taxon>Bacillota</taxon>
        <taxon>Bacilli</taxon>
        <taxon>Lactobacillales</taxon>
        <taxon>Lactobacillaceae</taxon>
        <taxon>Lactobacillus</taxon>
    </lineage>
</organism>
<keyword id="KW-0963">Cytoplasm</keyword>
<keyword id="KW-0342">GTP-binding</keyword>
<keyword id="KW-0378">Hydrolase</keyword>
<keyword id="KW-0479">Metal-binding</keyword>
<keyword id="KW-0547">Nucleotide-binding</keyword>
<keyword id="KW-0690">Ribosome biogenesis</keyword>
<keyword id="KW-0694">RNA-binding</keyword>
<keyword id="KW-0699">rRNA-binding</keyword>
<keyword id="KW-0862">Zinc</keyword>
<sequence length="297" mass="33911">MNKAQGTIVSAISGYYDVEIENEVVRTRARGVFRDRKQKPLVGDRVVVQLDNQGMNYLIEILPRTNEIGRPAVANVSKVLLVISAVEPDFSLELLDRYLTFFAWKNVGVVIYLSKADITPTEKLKAIKCKLDYYQKIGYSVFEDAEELERQLPTMIQKDQIWTLAGQSGAGKSTLLNKLENEANQETGAISTALNRGKHTTRQVKLFKYSSGFIADTPGFSAIDLFKIKVDELENYFYDLKDASVKCKFRRCQHIKEPGCEVKKLIEEGKIAKSRYDSYLKIRQEISENRMPEYLKK</sequence>
<accession>Q044G6</accession>
<gene>
    <name evidence="1" type="primary">rsgA</name>
    <name type="ordered locus">LGAS_0765</name>
</gene>
<evidence type="ECO:0000255" key="1">
    <source>
        <dbReference type="HAMAP-Rule" id="MF_01820"/>
    </source>
</evidence>
<evidence type="ECO:0000255" key="2">
    <source>
        <dbReference type="PROSITE-ProRule" id="PRU01058"/>
    </source>
</evidence>
<name>RSGA_LACGA</name>
<reference key="1">
    <citation type="journal article" date="2006" name="Proc. Natl. Acad. Sci. U.S.A.">
        <title>Comparative genomics of the lactic acid bacteria.</title>
        <authorList>
            <person name="Makarova K.S."/>
            <person name="Slesarev A."/>
            <person name="Wolf Y.I."/>
            <person name="Sorokin A."/>
            <person name="Mirkin B."/>
            <person name="Koonin E.V."/>
            <person name="Pavlov A."/>
            <person name="Pavlova N."/>
            <person name="Karamychev V."/>
            <person name="Polouchine N."/>
            <person name="Shakhova V."/>
            <person name="Grigoriev I."/>
            <person name="Lou Y."/>
            <person name="Rohksar D."/>
            <person name="Lucas S."/>
            <person name="Huang K."/>
            <person name="Goodstein D.M."/>
            <person name="Hawkins T."/>
            <person name="Plengvidhya V."/>
            <person name="Welker D."/>
            <person name="Hughes J."/>
            <person name="Goh Y."/>
            <person name="Benson A."/>
            <person name="Baldwin K."/>
            <person name="Lee J.-H."/>
            <person name="Diaz-Muniz I."/>
            <person name="Dosti B."/>
            <person name="Smeianov V."/>
            <person name="Wechter W."/>
            <person name="Barabote R."/>
            <person name="Lorca G."/>
            <person name="Altermann E."/>
            <person name="Barrangou R."/>
            <person name="Ganesan B."/>
            <person name="Xie Y."/>
            <person name="Rawsthorne H."/>
            <person name="Tamir D."/>
            <person name="Parker C."/>
            <person name="Breidt F."/>
            <person name="Broadbent J.R."/>
            <person name="Hutkins R."/>
            <person name="O'Sullivan D."/>
            <person name="Steele J."/>
            <person name="Unlu G."/>
            <person name="Saier M.H. Jr."/>
            <person name="Klaenhammer T."/>
            <person name="Richardson P."/>
            <person name="Kozyavkin S."/>
            <person name="Weimer B.C."/>
            <person name="Mills D.A."/>
        </authorList>
    </citation>
    <scope>NUCLEOTIDE SEQUENCE [LARGE SCALE GENOMIC DNA]</scope>
    <source>
        <strain>ATCC 33323 / DSM 20243 / BCRC 14619 / CIP 102991 / JCM 1131 / KCTC 3163 / NCIMB 11718 / NCTC 13722 / AM63</strain>
    </source>
</reference>
<feature type="chain" id="PRO_1000188092" description="Small ribosomal subunit biogenesis GTPase RsgA">
    <location>
        <begin position="1"/>
        <end position="297"/>
    </location>
</feature>
<feature type="domain" description="CP-type G" evidence="2">
    <location>
        <begin position="65"/>
        <end position="223"/>
    </location>
</feature>
<feature type="binding site" evidence="1">
    <location>
        <begin position="114"/>
        <end position="117"/>
    </location>
    <ligand>
        <name>GTP</name>
        <dbReference type="ChEBI" id="CHEBI:37565"/>
    </ligand>
</feature>
<feature type="binding site" evidence="1">
    <location>
        <begin position="166"/>
        <end position="174"/>
    </location>
    <ligand>
        <name>GTP</name>
        <dbReference type="ChEBI" id="CHEBI:37565"/>
    </ligand>
</feature>
<feature type="binding site" evidence="1">
    <location>
        <position position="247"/>
    </location>
    <ligand>
        <name>Zn(2+)</name>
        <dbReference type="ChEBI" id="CHEBI:29105"/>
    </ligand>
</feature>
<feature type="binding site" evidence="1">
    <location>
        <position position="252"/>
    </location>
    <ligand>
        <name>Zn(2+)</name>
        <dbReference type="ChEBI" id="CHEBI:29105"/>
    </ligand>
</feature>
<feature type="binding site" evidence="1">
    <location>
        <position position="254"/>
    </location>
    <ligand>
        <name>Zn(2+)</name>
        <dbReference type="ChEBI" id="CHEBI:29105"/>
    </ligand>
</feature>
<feature type="binding site" evidence="1">
    <location>
        <position position="260"/>
    </location>
    <ligand>
        <name>Zn(2+)</name>
        <dbReference type="ChEBI" id="CHEBI:29105"/>
    </ligand>
</feature>
<comment type="function">
    <text evidence="1">One of several proteins that assist in the late maturation steps of the functional core of the 30S ribosomal subunit. Helps release RbfA from mature subunits. May play a role in the assembly of ribosomal proteins into the subunit. Circularly permuted GTPase that catalyzes slow GTP hydrolysis, GTPase activity is stimulated by the 30S ribosomal subunit.</text>
</comment>
<comment type="cofactor">
    <cofactor evidence="1">
        <name>Zn(2+)</name>
        <dbReference type="ChEBI" id="CHEBI:29105"/>
    </cofactor>
    <text evidence="1">Binds 1 zinc ion per subunit.</text>
</comment>
<comment type="subunit">
    <text evidence="1">Monomer. Associates with 30S ribosomal subunit, binds 16S rRNA.</text>
</comment>
<comment type="subcellular location">
    <subcellularLocation>
        <location evidence="1">Cytoplasm</location>
    </subcellularLocation>
</comment>
<comment type="similarity">
    <text evidence="1">Belongs to the TRAFAC class YlqF/YawG GTPase family. RsgA subfamily.</text>
</comment>
<protein>
    <recommendedName>
        <fullName evidence="1">Small ribosomal subunit biogenesis GTPase RsgA</fullName>
        <ecNumber evidence="1">3.6.1.-</ecNumber>
    </recommendedName>
</protein>